<gene>
    <name evidence="1" type="primary">rpsP</name>
    <name type="ordered locus">BCI_0198</name>
</gene>
<evidence type="ECO:0000255" key="1">
    <source>
        <dbReference type="HAMAP-Rule" id="MF_00385"/>
    </source>
</evidence>
<evidence type="ECO:0000305" key="2"/>
<organism>
    <name type="scientific">Baumannia cicadellinicola subsp. Homalodisca coagulata</name>
    <dbReference type="NCBI Taxonomy" id="374463"/>
    <lineage>
        <taxon>Bacteria</taxon>
        <taxon>Pseudomonadati</taxon>
        <taxon>Pseudomonadota</taxon>
        <taxon>Gammaproteobacteria</taxon>
        <taxon>Candidatus Palibaumannia</taxon>
    </lineage>
</organism>
<sequence length="88" mass="10098">MVRIRLARGGAKKRPFYQIIVTDNHQARDGRFIERVGFFNPLATGQAVDLRLNMDRILYWINHGAKMSERLYALIKSAKNKSQYSSAG</sequence>
<feature type="chain" id="PRO_1000049216" description="Small ribosomal subunit protein bS16">
    <location>
        <begin position="1"/>
        <end position="88"/>
    </location>
</feature>
<keyword id="KW-1185">Reference proteome</keyword>
<keyword id="KW-0687">Ribonucleoprotein</keyword>
<keyword id="KW-0689">Ribosomal protein</keyword>
<name>RS16_BAUCH</name>
<accession>Q1LTQ9</accession>
<proteinExistence type="inferred from homology"/>
<comment type="similarity">
    <text evidence="1">Belongs to the bacterial ribosomal protein bS16 family.</text>
</comment>
<reference key="1">
    <citation type="journal article" date="2006" name="PLoS Biol.">
        <title>Metabolic complementarity and genomics of the dual bacterial symbiosis of sharpshooters.</title>
        <authorList>
            <person name="Wu D."/>
            <person name="Daugherty S.C."/>
            <person name="Van Aken S.E."/>
            <person name="Pai G.H."/>
            <person name="Watkins K.L."/>
            <person name="Khouri H."/>
            <person name="Tallon L.J."/>
            <person name="Zaborsky J.M."/>
            <person name="Dunbar H.E."/>
            <person name="Tran P.L."/>
            <person name="Moran N.A."/>
            <person name="Eisen J.A."/>
        </authorList>
    </citation>
    <scope>NUCLEOTIDE SEQUENCE [LARGE SCALE GENOMIC DNA]</scope>
</reference>
<protein>
    <recommendedName>
        <fullName evidence="1">Small ribosomal subunit protein bS16</fullName>
    </recommendedName>
    <alternativeName>
        <fullName evidence="2">30S ribosomal protein S16</fullName>
    </alternativeName>
</protein>
<dbReference type="EMBL" id="CP000238">
    <property type="protein sequence ID" value="ABF14146.1"/>
    <property type="molecule type" value="Genomic_DNA"/>
</dbReference>
<dbReference type="RefSeq" id="WP_011520388.1">
    <property type="nucleotide sequence ID" value="NC_007984.1"/>
</dbReference>
<dbReference type="SMR" id="Q1LTQ9"/>
<dbReference type="STRING" id="374463.BCI_0198"/>
<dbReference type="KEGG" id="bci:BCI_0198"/>
<dbReference type="HOGENOM" id="CLU_100590_5_1_6"/>
<dbReference type="OrthoDB" id="9807878at2"/>
<dbReference type="Proteomes" id="UP000002427">
    <property type="component" value="Chromosome"/>
</dbReference>
<dbReference type="GO" id="GO:0005737">
    <property type="term" value="C:cytoplasm"/>
    <property type="evidence" value="ECO:0007669"/>
    <property type="project" value="UniProtKB-ARBA"/>
</dbReference>
<dbReference type="GO" id="GO:0015935">
    <property type="term" value="C:small ribosomal subunit"/>
    <property type="evidence" value="ECO:0007669"/>
    <property type="project" value="TreeGrafter"/>
</dbReference>
<dbReference type="GO" id="GO:0003735">
    <property type="term" value="F:structural constituent of ribosome"/>
    <property type="evidence" value="ECO:0007669"/>
    <property type="project" value="InterPro"/>
</dbReference>
<dbReference type="GO" id="GO:0006412">
    <property type="term" value="P:translation"/>
    <property type="evidence" value="ECO:0007669"/>
    <property type="project" value="UniProtKB-UniRule"/>
</dbReference>
<dbReference type="Gene3D" id="3.30.1320.10">
    <property type="match status" value="1"/>
</dbReference>
<dbReference type="HAMAP" id="MF_00385">
    <property type="entry name" value="Ribosomal_bS16"/>
    <property type="match status" value="1"/>
</dbReference>
<dbReference type="InterPro" id="IPR000307">
    <property type="entry name" value="Ribosomal_bS16"/>
</dbReference>
<dbReference type="InterPro" id="IPR020592">
    <property type="entry name" value="Ribosomal_bS16_CS"/>
</dbReference>
<dbReference type="InterPro" id="IPR023803">
    <property type="entry name" value="Ribosomal_bS16_dom_sf"/>
</dbReference>
<dbReference type="NCBIfam" id="TIGR00002">
    <property type="entry name" value="S16"/>
    <property type="match status" value="1"/>
</dbReference>
<dbReference type="PANTHER" id="PTHR12919">
    <property type="entry name" value="30S RIBOSOMAL PROTEIN S16"/>
    <property type="match status" value="1"/>
</dbReference>
<dbReference type="PANTHER" id="PTHR12919:SF20">
    <property type="entry name" value="SMALL RIBOSOMAL SUBUNIT PROTEIN BS16M"/>
    <property type="match status" value="1"/>
</dbReference>
<dbReference type="Pfam" id="PF00886">
    <property type="entry name" value="Ribosomal_S16"/>
    <property type="match status" value="1"/>
</dbReference>
<dbReference type="SUPFAM" id="SSF54565">
    <property type="entry name" value="Ribosomal protein S16"/>
    <property type="match status" value="1"/>
</dbReference>
<dbReference type="PROSITE" id="PS00732">
    <property type="entry name" value="RIBOSOMAL_S16"/>
    <property type="match status" value="1"/>
</dbReference>